<accession>A9KL08</accession>
<protein>
    <recommendedName>
        <fullName evidence="1">tRNA dimethylallyltransferase</fullName>
        <ecNumber evidence="1">2.5.1.75</ecNumber>
    </recommendedName>
    <alternativeName>
        <fullName evidence="1">Dimethylallyl diphosphate:tRNA dimethylallyltransferase</fullName>
        <shortName evidence="1">DMAPP:tRNA dimethylallyltransferase</shortName>
        <shortName evidence="1">DMATase</shortName>
    </alternativeName>
    <alternativeName>
        <fullName evidence="1">Isopentenyl-diphosphate:tRNA isopentenyltransferase</fullName>
        <shortName evidence="1">IPP transferase</shortName>
        <shortName evidence="1">IPPT</shortName>
        <shortName evidence="1">IPTase</shortName>
    </alternativeName>
</protein>
<keyword id="KW-0067">ATP-binding</keyword>
<keyword id="KW-0460">Magnesium</keyword>
<keyword id="KW-0547">Nucleotide-binding</keyword>
<keyword id="KW-1185">Reference proteome</keyword>
<keyword id="KW-0808">Transferase</keyword>
<keyword id="KW-0819">tRNA processing</keyword>
<proteinExistence type="inferred from homology"/>
<gene>
    <name evidence="1" type="primary">miaA</name>
    <name type="ordered locus">Cphy_2379</name>
</gene>
<organism>
    <name type="scientific">Lachnoclostridium phytofermentans (strain ATCC 700394 / DSM 18823 / ISDg)</name>
    <name type="common">Clostridium phytofermentans</name>
    <dbReference type="NCBI Taxonomy" id="357809"/>
    <lineage>
        <taxon>Bacteria</taxon>
        <taxon>Bacillati</taxon>
        <taxon>Bacillota</taxon>
        <taxon>Clostridia</taxon>
        <taxon>Lachnospirales</taxon>
        <taxon>Lachnospiraceae</taxon>
    </lineage>
</organism>
<reference key="1">
    <citation type="submission" date="2007-11" db="EMBL/GenBank/DDBJ databases">
        <title>Complete genome sequence of Clostridium phytofermentans ISDg.</title>
        <authorList>
            <person name="Leschine S.B."/>
            <person name="Warnick T.A."/>
            <person name="Blanchard J.L."/>
            <person name="Schnell D.J."/>
            <person name="Petit E.L."/>
            <person name="LaTouf W.G."/>
            <person name="Copeland A."/>
            <person name="Lucas S."/>
            <person name="Lapidus A."/>
            <person name="Barry K."/>
            <person name="Glavina del Rio T."/>
            <person name="Dalin E."/>
            <person name="Tice H."/>
            <person name="Pitluck S."/>
            <person name="Kiss H."/>
            <person name="Brettin T."/>
            <person name="Bruce D."/>
            <person name="Detter J.C."/>
            <person name="Han C."/>
            <person name="Kuske C."/>
            <person name="Schmutz J."/>
            <person name="Larimer F."/>
            <person name="Land M."/>
            <person name="Hauser L."/>
            <person name="Kyrpides N."/>
            <person name="Kim E.A."/>
            <person name="Richardson P."/>
        </authorList>
    </citation>
    <scope>NUCLEOTIDE SEQUENCE [LARGE SCALE GENOMIC DNA]</scope>
    <source>
        <strain>ATCC 700394 / DSM 18823 / ISDg</strain>
    </source>
</reference>
<comment type="function">
    <text evidence="1">Catalyzes the transfer of a dimethylallyl group onto the adenine at position 37 in tRNAs that read codons beginning with uridine, leading to the formation of N6-(dimethylallyl)adenosine (i(6)A).</text>
</comment>
<comment type="catalytic activity">
    <reaction evidence="1">
        <text>adenosine(37) in tRNA + dimethylallyl diphosphate = N(6)-dimethylallyladenosine(37) in tRNA + diphosphate</text>
        <dbReference type="Rhea" id="RHEA:26482"/>
        <dbReference type="Rhea" id="RHEA-COMP:10162"/>
        <dbReference type="Rhea" id="RHEA-COMP:10375"/>
        <dbReference type="ChEBI" id="CHEBI:33019"/>
        <dbReference type="ChEBI" id="CHEBI:57623"/>
        <dbReference type="ChEBI" id="CHEBI:74411"/>
        <dbReference type="ChEBI" id="CHEBI:74415"/>
        <dbReference type="EC" id="2.5.1.75"/>
    </reaction>
</comment>
<comment type="cofactor">
    <cofactor evidence="1">
        <name>Mg(2+)</name>
        <dbReference type="ChEBI" id="CHEBI:18420"/>
    </cofactor>
</comment>
<comment type="subunit">
    <text evidence="1">Monomer.</text>
</comment>
<comment type="similarity">
    <text evidence="1">Belongs to the IPP transferase family.</text>
</comment>
<dbReference type="EC" id="2.5.1.75" evidence="1"/>
<dbReference type="EMBL" id="CP000885">
    <property type="protein sequence ID" value="ABX42740.1"/>
    <property type="molecule type" value="Genomic_DNA"/>
</dbReference>
<dbReference type="RefSeq" id="WP_012200394.1">
    <property type="nucleotide sequence ID" value="NC_010001.1"/>
</dbReference>
<dbReference type="SMR" id="A9KL08"/>
<dbReference type="STRING" id="357809.Cphy_2379"/>
<dbReference type="KEGG" id="cpy:Cphy_2379"/>
<dbReference type="eggNOG" id="COG0324">
    <property type="taxonomic scope" value="Bacteria"/>
</dbReference>
<dbReference type="HOGENOM" id="CLU_032616_0_1_9"/>
<dbReference type="OrthoDB" id="9776390at2"/>
<dbReference type="Proteomes" id="UP000000370">
    <property type="component" value="Chromosome"/>
</dbReference>
<dbReference type="GO" id="GO:0005524">
    <property type="term" value="F:ATP binding"/>
    <property type="evidence" value="ECO:0007669"/>
    <property type="project" value="UniProtKB-UniRule"/>
</dbReference>
<dbReference type="GO" id="GO:0052381">
    <property type="term" value="F:tRNA dimethylallyltransferase activity"/>
    <property type="evidence" value="ECO:0007669"/>
    <property type="project" value="UniProtKB-UniRule"/>
</dbReference>
<dbReference type="GO" id="GO:0006400">
    <property type="term" value="P:tRNA modification"/>
    <property type="evidence" value="ECO:0007669"/>
    <property type="project" value="TreeGrafter"/>
</dbReference>
<dbReference type="Gene3D" id="1.10.20.140">
    <property type="match status" value="1"/>
</dbReference>
<dbReference type="Gene3D" id="3.40.50.300">
    <property type="entry name" value="P-loop containing nucleotide triphosphate hydrolases"/>
    <property type="match status" value="1"/>
</dbReference>
<dbReference type="HAMAP" id="MF_00185">
    <property type="entry name" value="IPP_trans"/>
    <property type="match status" value="1"/>
</dbReference>
<dbReference type="InterPro" id="IPR039657">
    <property type="entry name" value="Dimethylallyltransferase"/>
</dbReference>
<dbReference type="InterPro" id="IPR018022">
    <property type="entry name" value="IPT"/>
</dbReference>
<dbReference type="InterPro" id="IPR027417">
    <property type="entry name" value="P-loop_NTPase"/>
</dbReference>
<dbReference type="NCBIfam" id="TIGR00174">
    <property type="entry name" value="miaA"/>
    <property type="match status" value="1"/>
</dbReference>
<dbReference type="PANTHER" id="PTHR11088">
    <property type="entry name" value="TRNA DIMETHYLALLYLTRANSFERASE"/>
    <property type="match status" value="1"/>
</dbReference>
<dbReference type="PANTHER" id="PTHR11088:SF60">
    <property type="entry name" value="TRNA DIMETHYLALLYLTRANSFERASE"/>
    <property type="match status" value="1"/>
</dbReference>
<dbReference type="Pfam" id="PF01715">
    <property type="entry name" value="IPPT"/>
    <property type="match status" value="1"/>
</dbReference>
<dbReference type="SUPFAM" id="SSF52540">
    <property type="entry name" value="P-loop containing nucleoside triphosphate hydrolases"/>
    <property type="match status" value="1"/>
</dbReference>
<sequence>MQPLVILTGPTAVGKTKLSIDLAKSINGEIISADSMQVYRHMDIGTAKITPEEMEGVTHYLVDEFEPDEEFNVVKFKDCAKEAIREIYSKGKVPIIVGGTGFYIQAVLKDIDFTENDSDTPYRKELEELAQTEGAIKLHDILKQCDPVAAEAIHPNNIKRTIRAIEYFKLTGEPISKHNEEQRGNESPYQYAYFVLNNDREILYENIDLRVDKMLDAGLVKEVLWLKEQGYDRSLVSMQGLGYKEIYAYLEGECSLEETVYLLKRDTRHFAKRQLTWFKREQDVIWLSKKDYNSDASILTEMVKILTEKEIIK</sequence>
<evidence type="ECO:0000255" key="1">
    <source>
        <dbReference type="HAMAP-Rule" id="MF_00185"/>
    </source>
</evidence>
<feature type="chain" id="PRO_1000077392" description="tRNA dimethylallyltransferase">
    <location>
        <begin position="1"/>
        <end position="313"/>
    </location>
</feature>
<feature type="region of interest" description="Interaction with substrate tRNA" evidence="1">
    <location>
        <begin position="34"/>
        <end position="37"/>
    </location>
</feature>
<feature type="binding site" evidence="1">
    <location>
        <begin position="9"/>
        <end position="16"/>
    </location>
    <ligand>
        <name>ATP</name>
        <dbReference type="ChEBI" id="CHEBI:30616"/>
    </ligand>
</feature>
<feature type="binding site" evidence="1">
    <location>
        <begin position="11"/>
        <end position="16"/>
    </location>
    <ligand>
        <name>substrate</name>
    </ligand>
</feature>
<feature type="site" description="Interaction with substrate tRNA" evidence="1">
    <location>
        <position position="100"/>
    </location>
</feature>
<feature type="site" description="Interaction with substrate tRNA" evidence="1">
    <location>
        <position position="123"/>
    </location>
</feature>
<name>MIAA_LACP7</name>